<sequence>MATTPPPADAPRHVPVLRDRCVNLLAPAIEAANLAGRRAVVVDATLGMGGHSEAMLTRFENLHLIGIDRDTQALDLSGARLKPFEDRTDLVHAVYDEITEVLDDLGFESIDGVLMDLGVSSLQLDEAERGFAYSYDAPLDMRMDTSRGQSAADVVNSYSETELVSIIRRWGEEKFAGRIANRIVAARAEKPFAGTGELVEVIRKAVPAAAARTGGHPAKRTFQALRIEVNEELVVLERAVPAAVDALAIGGRAVVMSYHSLEDKIVKKFFSTGVTSSAPPGFPVELDSQKPELKTLTKGTEVPTEAEIAENPRAASARLRAVERIRPRRTS</sequence>
<protein>
    <recommendedName>
        <fullName evidence="1">Ribosomal RNA small subunit methyltransferase H</fullName>
        <ecNumber evidence="1">2.1.1.199</ecNumber>
    </recommendedName>
    <alternativeName>
        <fullName evidence="1">16S rRNA m(4)C1402 methyltransferase</fullName>
    </alternativeName>
    <alternativeName>
        <fullName evidence="1">rRNA (cytosine-N(4)-)-methyltransferase RsmH</fullName>
    </alternativeName>
</protein>
<feature type="chain" id="PRO_0000387066" description="Ribosomal RNA small subunit methyltransferase H">
    <location>
        <begin position="1"/>
        <end position="331"/>
    </location>
</feature>
<feature type="binding site" evidence="1">
    <location>
        <begin position="49"/>
        <end position="51"/>
    </location>
    <ligand>
        <name>S-adenosyl-L-methionine</name>
        <dbReference type="ChEBI" id="CHEBI:59789"/>
    </ligand>
</feature>
<feature type="binding site" evidence="1">
    <location>
        <position position="68"/>
    </location>
    <ligand>
        <name>S-adenosyl-L-methionine</name>
        <dbReference type="ChEBI" id="CHEBI:59789"/>
    </ligand>
</feature>
<feature type="binding site" evidence="1">
    <location>
        <position position="102"/>
    </location>
    <ligand>
        <name>S-adenosyl-L-methionine</name>
        <dbReference type="ChEBI" id="CHEBI:59789"/>
    </ligand>
</feature>
<feature type="binding site" evidence="1">
    <location>
        <position position="116"/>
    </location>
    <ligand>
        <name>S-adenosyl-L-methionine</name>
        <dbReference type="ChEBI" id="CHEBI:59789"/>
    </ligand>
</feature>
<feature type="binding site" evidence="1">
    <location>
        <position position="123"/>
    </location>
    <ligand>
        <name>S-adenosyl-L-methionine</name>
        <dbReference type="ChEBI" id="CHEBI:59789"/>
    </ligand>
</feature>
<dbReference type="EC" id="2.1.1.199" evidence="1"/>
<dbReference type="EMBL" id="CP000910">
    <property type="protein sequence ID" value="ABY24228.1"/>
    <property type="status" value="ALT_INIT"/>
    <property type="molecule type" value="Genomic_DNA"/>
</dbReference>
<dbReference type="RefSeq" id="WP_041684714.1">
    <property type="nucleotide sequence ID" value="NC_010168.1"/>
</dbReference>
<dbReference type="SMR" id="A9WRE6"/>
<dbReference type="STRING" id="288705.RSal33209_2502"/>
<dbReference type="KEGG" id="rsa:RSal33209_2502"/>
<dbReference type="eggNOG" id="COG0275">
    <property type="taxonomic scope" value="Bacteria"/>
</dbReference>
<dbReference type="HOGENOM" id="CLU_038422_0_0_11"/>
<dbReference type="Proteomes" id="UP000002007">
    <property type="component" value="Chromosome"/>
</dbReference>
<dbReference type="GO" id="GO:0005737">
    <property type="term" value="C:cytoplasm"/>
    <property type="evidence" value="ECO:0007669"/>
    <property type="project" value="UniProtKB-SubCell"/>
</dbReference>
<dbReference type="GO" id="GO:0071424">
    <property type="term" value="F:rRNA (cytosine-N4-)-methyltransferase activity"/>
    <property type="evidence" value="ECO:0007669"/>
    <property type="project" value="UniProtKB-UniRule"/>
</dbReference>
<dbReference type="GO" id="GO:0070475">
    <property type="term" value="P:rRNA base methylation"/>
    <property type="evidence" value="ECO:0007669"/>
    <property type="project" value="UniProtKB-UniRule"/>
</dbReference>
<dbReference type="FunFam" id="1.10.150.170:FF:000001">
    <property type="entry name" value="Ribosomal RNA small subunit methyltransferase H"/>
    <property type="match status" value="1"/>
</dbReference>
<dbReference type="Gene3D" id="1.10.150.170">
    <property type="entry name" value="Putative methyltransferase TM0872, insert domain"/>
    <property type="match status" value="1"/>
</dbReference>
<dbReference type="Gene3D" id="3.40.50.150">
    <property type="entry name" value="Vaccinia Virus protein VP39"/>
    <property type="match status" value="1"/>
</dbReference>
<dbReference type="HAMAP" id="MF_01007">
    <property type="entry name" value="16SrRNA_methyltr_H"/>
    <property type="match status" value="1"/>
</dbReference>
<dbReference type="InterPro" id="IPR002903">
    <property type="entry name" value="RsmH"/>
</dbReference>
<dbReference type="InterPro" id="IPR023397">
    <property type="entry name" value="SAM-dep_MeTrfase_MraW_recog"/>
</dbReference>
<dbReference type="InterPro" id="IPR029063">
    <property type="entry name" value="SAM-dependent_MTases_sf"/>
</dbReference>
<dbReference type="NCBIfam" id="TIGR00006">
    <property type="entry name" value="16S rRNA (cytosine(1402)-N(4))-methyltransferase RsmH"/>
    <property type="match status" value="1"/>
</dbReference>
<dbReference type="PANTHER" id="PTHR11265:SF0">
    <property type="entry name" value="12S RRNA N4-METHYLCYTIDINE METHYLTRANSFERASE"/>
    <property type="match status" value="1"/>
</dbReference>
<dbReference type="PANTHER" id="PTHR11265">
    <property type="entry name" value="S-ADENOSYL-METHYLTRANSFERASE MRAW"/>
    <property type="match status" value="1"/>
</dbReference>
<dbReference type="Pfam" id="PF01795">
    <property type="entry name" value="Methyltransf_5"/>
    <property type="match status" value="1"/>
</dbReference>
<dbReference type="PIRSF" id="PIRSF004486">
    <property type="entry name" value="MraW"/>
    <property type="match status" value="1"/>
</dbReference>
<dbReference type="SUPFAM" id="SSF81799">
    <property type="entry name" value="Putative methyltransferase TM0872, insert domain"/>
    <property type="match status" value="1"/>
</dbReference>
<dbReference type="SUPFAM" id="SSF53335">
    <property type="entry name" value="S-adenosyl-L-methionine-dependent methyltransferases"/>
    <property type="match status" value="1"/>
</dbReference>
<proteinExistence type="inferred from homology"/>
<comment type="function">
    <text evidence="1">Specifically methylates the N4 position of cytidine in position 1402 (C1402) of 16S rRNA.</text>
</comment>
<comment type="catalytic activity">
    <reaction evidence="1">
        <text>cytidine(1402) in 16S rRNA + S-adenosyl-L-methionine = N(4)-methylcytidine(1402) in 16S rRNA + S-adenosyl-L-homocysteine + H(+)</text>
        <dbReference type="Rhea" id="RHEA:42928"/>
        <dbReference type="Rhea" id="RHEA-COMP:10286"/>
        <dbReference type="Rhea" id="RHEA-COMP:10287"/>
        <dbReference type="ChEBI" id="CHEBI:15378"/>
        <dbReference type="ChEBI" id="CHEBI:57856"/>
        <dbReference type="ChEBI" id="CHEBI:59789"/>
        <dbReference type="ChEBI" id="CHEBI:74506"/>
        <dbReference type="ChEBI" id="CHEBI:82748"/>
        <dbReference type="EC" id="2.1.1.199"/>
    </reaction>
</comment>
<comment type="subcellular location">
    <subcellularLocation>
        <location evidence="1">Cytoplasm</location>
    </subcellularLocation>
</comment>
<comment type="similarity">
    <text evidence="1">Belongs to the methyltransferase superfamily. RsmH family.</text>
</comment>
<comment type="sequence caution" evidence="2">
    <conflict type="erroneous initiation">
        <sequence resource="EMBL-CDS" id="ABY24228"/>
    </conflict>
</comment>
<organism>
    <name type="scientific">Renibacterium salmoninarum (strain ATCC 33209 / DSM 20767 / JCM 11484 / NBRC 15589 / NCIMB 2235)</name>
    <dbReference type="NCBI Taxonomy" id="288705"/>
    <lineage>
        <taxon>Bacteria</taxon>
        <taxon>Bacillati</taxon>
        <taxon>Actinomycetota</taxon>
        <taxon>Actinomycetes</taxon>
        <taxon>Micrococcales</taxon>
        <taxon>Micrococcaceae</taxon>
        <taxon>Renibacterium</taxon>
    </lineage>
</organism>
<evidence type="ECO:0000255" key="1">
    <source>
        <dbReference type="HAMAP-Rule" id="MF_01007"/>
    </source>
</evidence>
<evidence type="ECO:0000305" key="2"/>
<reference key="1">
    <citation type="journal article" date="2008" name="J. Bacteriol.">
        <title>Genome sequence of the fish pathogen Renibacterium salmoninarum suggests reductive evolution away from an environmental Arthrobacter ancestor.</title>
        <authorList>
            <person name="Wiens G.D."/>
            <person name="Rockey D.D."/>
            <person name="Wu Z."/>
            <person name="Chang J."/>
            <person name="Levy R."/>
            <person name="Crane S."/>
            <person name="Chen D.S."/>
            <person name="Capri G.R."/>
            <person name="Burnett J.R."/>
            <person name="Sudheesh P.S."/>
            <person name="Schipma M.J."/>
            <person name="Burd H."/>
            <person name="Bhattacharyya A."/>
            <person name="Rhodes L.D."/>
            <person name="Kaul R."/>
            <person name="Strom M.S."/>
        </authorList>
    </citation>
    <scope>NUCLEOTIDE SEQUENCE [LARGE SCALE GENOMIC DNA]</scope>
    <source>
        <strain>ATCC 33209 / DSM 20767 / JCM 11484 / NBRC 15589 / NCIMB 2235</strain>
    </source>
</reference>
<gene>
    <name evidence="1" type="primary">rsmH</name>
    <name type="synonym">mraW</name>
    <name type="ordered locus">RSal33209_2502</name>
</gene>
<keyword id="KW-0963">Cytoplasm</keyword>
<keyword id="KW-0489">Methyltransferase</keyword>
<keyword id="KW-1185">Reference proteome</keyword>
<keyword id="KW-0698">rRNA processing</keyword>
<keyword id="KW-0949">S-adenosyl-L-methionine</keyword>
<keyword id="KW-0808">Transferase</keyword>
<accession>A9WRE6</accession>
<name>RSMH_RENSM</name>